<protein>
    <recommendedName>
        <fullName>Ovomucoid</fullName>
    </recommendedName>
    <alternativeName>
        <fullName>Allergen Gal d I</fullName>
    </alternativeName>
    <allergenName>Gal d 1</allergenName>
</protein>
<comment type="function">
    <text evidence="3">Serine protease inhibitor. Inhibits trypsin.</text>
</comment>
<comment type="biophysicochemical properties">
    <phDependence>
        <text evidence="3">No decrease in activity observed after incubating at pH 2.5 and pH 7.4 for 1 hour. Retains 20% activity after incubation at pH 12 for 1 hour.</text>
    </phDependence>
    <temperatureDependence>
        <text evidence="3">No decrease in activity observed after heating for 1 hour at up to 80 degrees Celsius. Retains 20% activity after incubation at 95 degrees Celsius for 1 hour.</text>
    </temperatureDependence>
</comment>
<comment type="subcellular location">
    <subcellularLocation>
        <location>Secreted</location>
    </subcellularLocation>
</comment>
<comment type="domain">
    <text>Avian ovomucoid consists of three homologous, tandem Kazal family inhibitory domains.</text>
</comment>
<comment type="allergen">
    <text>Causes an allergic reaction in human.</text>
</comment>
<evidence type="ECO:0000255" key="1">
    <source>
        <dbReference type="PROSITE-ProRule" id="PRU00798"/>
    </source>
</evidence>
<evidence type="ECO:0000269" key="2">
    <source>
    </source>
</evidence>
<evidence type="ECO:0000269" key="3">
    <source>
    </source>
</evidence>
<evidence type="ECO:0000269" key="4">
    <source>
    </source>
</evidence>
<evidence type="ECO:0000305" key="5"/>
<sequence>MAMAGVFVLFSFVLCGFLPDAAFGAEVDCSRFPNATDKEGKDVLVCNKDLRPICGTDGVTYTNDCLLCAYSIEFGTNISKEHDGECKETVPMNCSSYANTTSEDGKVMVLCNRAFNPVCGTDGVTYDNECLLCAHKVEQGASVDKRHDGGCRKELAAVSVDCSEYPKPDCTAEDRPLCGSDNKTYGNKCNFCNAVVESNGTLTLSHFGKC</sequence>
<feature type="signal peptide" evidence="4">
    <location>
        <begin position="1"/>
        <end position="24"/>
    </location>
</feature>
<feature type="chain" id="PRO_0000016579" description="Ovomucoid">
    <location>
        <begin position="25"/>
        <end position="210"/>
    </location>
</feature>
<feature type="domain" description="Kazal-like 1" evidence="1">
    <location>
        <begin position="25"/>
        <end position="88"/>
    </location>
</feature>
<feature type="domain" description="Kazal-like 2" evidence="1">
    <location>
        <begin position="89"/>
        <end position="153"/>
    </location>
</feature>
<feature type="domain" description="Kazal-like 3" evidence="1">
    <location>
        <begin position="156"/>
        <end position="210"/>
    </location>
</feature>
<feature type="site" description="Reactive bond 1 for endoproteinase Lys-C">
    <location>
        <begin position="48"/>
        <end position="49"/>
    </location>
</feature>
<feature type="site" description="Reactive bond 2 for trypsin">
    <location>
        <begin position="113"/>
        <end position="114"/>
    </location>
</feature>
<feature type="site" description="Reactive bond 3">
    <location>
        <begin position="172"/>
        <end position="173"/>
    </location>
</feature>
<feature type="glycosylation site" description="N-linked (GlcNAc...) asparagine">
    <location>
        <position position="34"/>
    </location>
</feature>
<feature type="glycosylation site" description="N-linked (GlcNAc...) asparagine" evidence="2">
    <location>
        <position position="77"/>
    </location>
</feature>
<feature type="glycosylation site" description="N-linked (GlcNAc...) asparagine">
    <location>
        <position position="93"/>
    </location>
</feature>
<feature type="glycosylation site" description="N-linked (GlcNAc...) asparagine">
    <location>
        <position position="99"/>
    </location>
</feature>
<feature type="glycosylation site" description="N-linked (GlcNAc...) asparagine; partial" evidence="2">
    <location>
        <position position="199"/>
    </location>
</feature>
<feature type="disulfide bond">
    <location>
        <begin position="29"/>
        <end position="68"/>
    </location>
</feature>
<feature type="disulfide bond">
    <location>
        <begin position="46"/>
        <end position="65"/>
    </location>
</feature>
<feature type="disulfide bond">
    <location>
        <begin position="54"/>
        <end position="86"/>
    </location>
</feature>
<feature type="disulfide bond">
    <location>
        <begin position="94"/>
        <end position="133"/>
    </location>
</feature>
<feature type="disulfide bond">
    <location>
        <begin position="111"/>
        <end position="130"/>
    </location>
</feature>
<feature type="disulfide bond">
    <location>
        <begin position="119"/>
        <end position="151"/>
    </location>
</feature>
<feature type="disulfide bond">
    <location>
        <begin position="162"/>
        <end position="192"/>
    </location>
</feature>
<feature type="disulfide bond">
    <location>
        <begin position="170"/>
        <end position="189"/>
    </location>
</feature>
<feature type="disulfide bond">
    <location>
        <begin position="178"/>
        <end position="210"/>
    </location>
</feature>
<feature type="sequence variant" description="Due to an ambiguous intron excision.">
    <location>
        <begin position="158"/>
        <end position="159"/>
    </location>
</feature>
<feature type="sequence conflict" description="In Ref. 2; AA sequence." evidence="5" ref="2">
    <original>T</original>
    <variation>N</variation>
    <location>
        <position position="62"/>
    </location>
</feature>
<feature type="sequence conflict" description="In Ref. 2; AA sequence." evidence="5" ref="2">
    <original>D</original>
    <variation>E</variation>
    <location>
        <position position="64"/>
    </location>
</feature>
<feature type="sequence conflict" description="In Ref. 2; AA sequence." evidence="5" ref="2">
    <original>M</original>
    <variation>T</variation>
    <location>
        <position position="108"/>
    </location>
</feature>
<feature type="sequence conflict" description="In Ref. 2; AA sequence." evidence="5" ref="2">
    <original>G</original>
    <variation>E</variation>
    <location>
        <position position="150"/>
    </location>
</feature>
<dbReference type="EMBL" id="J00902">
    <property type="status" value="NOT_ANNOTATED_CDS"/>
    <property type="molecule type" value="mRNA"/>
</dbReference>
<dbReference type="PIR" id="A92754">
    <property type="entry name" value="TICHM"/>
</dbReference>
<dbReference type="RefSeq" id="NP_001295423.1">
    <property type="nucleotide sequence ID" value="NM_001308494.2"/>
</dbReference>
<dbReference type="RefSeq" id="XP_015149249.1">
    <property type="nucleotide sequence ID" value="XM_015293763.1"/>
</dbReference>
<dbReference type="SMR" id="P01005"/>
<dbReference type="STRING" id="9031.ENSGALP00000005544"/>
<dbReference type="Allergome" id="3291">
    <property type="allergen name" value="Gal d 1.0101"/>
</dbReference>
<dbReference type="Allergome" id="359">
    <property type="allergen name" value="Gal d 1"/>
</dbReference>
<dbReference type="MEROPS" id="I01.001"/>
<dbReference type="MEROPS" id="I01.002"/>
<dbReference type="MEROPS" id="I01.003"/>
<dbReference type="GlyConnect" id="479">
    <property type="glycosylation" value="44 N-Linked glycans"/>
</dbReference>
<dbReference type="GlyGen" id="P01005">
    <property type="glycosylation" value="6 sites, 64 N-linked glycans (1 site)"/>
</dbReference>
<dbReference type="iPTMnet" id="P01005"/>
<dbReference type="GeneID" id="416236"/>
<dbReference type="KEGG" id="gga:416236"/>
<dbReference type="CTD" id="84651"/>
<dbReference type="VEuPathDB" id="HostDB:geneid_416236"/>
<dbReference type="HOGENOM" id="CLU_087965_0_0_1"/>
<dbReference type="InParanoid" id="P01005"/>
<dbReference type="OMA" id="LCGSDNT"/>
<dbReference type="OrthoDB" id="126772at2759"/>
<dbReference type="PhylomeDB" id="P01005"/>
<dbReference type="TreeFam" id="TF352550"/>
<dbReference type="PRO" id="PR:P01005"/>
<dbReference type="Proteomes" id="UP000000539">
    <property type="component" value="Chromosome 13"/>
</dbReference>
<dbReference type="Bgee" id="ENSGALG00000003512">
    <property type="expression patterns" value="Expressed in lung and 2 other cell types or tissues"/>
</dbReference>
<dbReference type="GO" id="GO:0005783">
    <property type="term" value="C:endoplasmic reticulum"/>
    <property type="evidence" value="ECO:0000314"/>
    <property type="project" value="AgBase"/>
</dbReference>
<dbReference type="GO" id="GO:0005615">
    <property type="term" value="C:extracellular space"/>
    <property type="evidence" value="ECO:0000304"/>
    <property type="project" value="AgBase"/>
</dbReference>
<dbReference type="GO" id="GO:0032991">
    <property type="term" value="C:protein-containing complex"/>
    <property type="evidence" value="ECO:0000314"/>
    <property type="project" value="AgBase"/>
</dbReference>
<dbReference type="GO" id="GO:0030246">
    <property type="term" value="F:carbohydrate binding"/>
    <property type="evidence" value="ECO:0000314"/>
    <property type="project" value="AgBase"/>
</dbReference>
<dbReference type="GO" id="GO:0019863">
    <property type="term" value="F:IgE binding"/>
    <property type="evidence" value="ECO:0000314"/>
    <property type="project" value="AgBase"/>
</dbReference>
<dbReference type="GO" id="GO:0019864">
    <property type="term" value="F:IgG binding"/>
    <property type="evidence" value="ECO:0000315"/>
    <property type="project" value="AgBase"/>
</dbReference>
<dbReference type="GO" id="GO:0004867">
    <property type="term" value="F:serine-type endopeptidase inhibitor activity"/>
    <property type="evidence" value="ECO:0000314"/>
    <property type="project" value="AgBase"/>
</dbReference>
<dbReference type="GO" id="GO:0048545">
    <property type="term" value="P:response to steroid hormone"/>
    <property type="evidence" value="ECO:0000304"/>
    <property type="project" value="AgBase"/>
</dbReference>
<dbReference type="CDD" id="cd00104">
    <property type="entry name" value="KAZAL_FS"/>
    <property type="match status" value="1"/>
</dbReference>
<dbReference type="CDD" id="cd01327">
    <property type="entry name" value="KAZAL_PSTI"/>
    <property type="match status" value="1"/>
</dbReference>
<dbReference type="FunFam" id="3.30.60.30:FF:000036">
    <property type="entry name" value="Ovomucoid"/>
    <property type="match status" value="2"/>
</dbReference>
<dbReference type="FunFam" id="3.30.60.30:FF:000037">
    <property type="entry name" value="Ovomucoid"/>
    <property type="match status" value="1"/>
</dbReference>
<dbReference type="Gene3D" id="3.30.60.30">
    <property type="match status" value="3"/>
</dbReference>
<dbReference type="InterPro" id="IPR002350">
    <property type="entry name" value="Kazal_dom"/>
</dbReference>
<dbReference type="InterPro" id="IPR036058">
    <property type="entry name" value="Kazal_dom_sf"/>
</dbReference>
<dbReference type="PANTHER" id="PTHR21312:SF28">
    <property type="entry name" value="OVOINHIBITOR-RELATED"/>
    <property type="match status" value="1"/>
</dbReference>
<dbReference type="PANTHER" id="PTHR21312">
    <property type="entry name" value="SERINE PROTEASE INHIBITOR"/>
    <property type="match status" value="1"/>
</dbReference>
<dbReference type="Pfam" id="PF00050">
    <property type="entry name" value="Kazal_1"/>
    <property type="match status" value="3"/>
</dbReference>
<dbReference type="SMART" id="SM00280">
    <property type="entry name" value="KAZAL"/>
    <property type="match status" value="3"/>
</dbReference>
<dbReference type="SUPFAM" id="SSF100895">
    <property type="entry name" value="Kazal-type serine protease inhibitors"/>
    <property type="match status" value="3"/>
</dbReference>
<dbReference type="PROSITE" id="PS00282">
    <property type="entry name" value="KAZAL_1"/>
    <property type="match status" value="3"/>
</dbReference>
<dbReference type="PROSITE" id="PS51465">
    <property type="entry name" value="KAZAL_2"/>
    <property type="match status" value="3"/>
</dbReference>
<proteinExistence type="evidence at protein level"/>
<accession>P01005</accession>
<reference key="1">
    <citation type="journal article" date="1980" name="J. Cell Biol.">
        <title>Primary sequence of ovomucoid messenger RNA as determined from cloned complementary DNA.</title>
        <authorList>
            <person name="Catterall J.F."/>
            <person name="Stein J.P."/>
            <person name="Kristo P."/>
            <person name="Means A.R."/>
            <person name="O'Malley B.W."/>
        </authorList>
    </citation>
    <scope>NUCLEOTIDE SEQUENCE [MRNA]</scope>
</reference>
<reference key="2">
    <citation type="journal article" date="1987" name="Biochemistry">
        <title>Chicken ovomucoid: determination of its amino acid sequence, determination of the trypsin reactive site, and preparation of all three of its domains.</title>
        <authorList>
            <person name="Kato I."/>
            <person name="Schrode J."/>
            <person name="Kohr W.J."/>
            <person name="Laskowski M. Jr."/>
        </authorList>
    </citation>
    <scope>PROTEIN SEQUENCE OF 25-210</scope>
</reference>
<reference key="3">
    <citation type="journal article" date="1978" name="J. Biol. Chem.">
        <title>Precursor of egg white ovomucoid. Amino acid sequence of an NH2-terminal extension.</title>
        <authorList>
            <person name="Thibodeau S.N."/>
            <person name="Palmiter R.D."/>
            <person name="Walsh K.A."/>
        </authorList>
    </citation>
    <scope>PROTEIN SEQUENCE OF 1-44 (PRECURSOR PROTEIN)</scope>
</reference>
<reference key="4">
    <citation type="journal article" date="2004" name="J. Proteome Res.">
        <title>A new strategy for identification of N-glycosylated proteins and unambiguous assignment of their glycosylation sites using HILIC enrichment and partial deglycosylation.</title>
        <authorList>
            <person name="Hagglund P."/>
            <person name="Bunkenborg J."/>
            <person name="Elortza F."/>
            <person name="Jensen O.N."/>
            <person name="Roepstorff P."/>
        </authorList>
    </citation>
    <scope>GLYCOSYLATION AT ASN-77 AND ASN-199</scope>
    <scope>IDENTIFICATION BY MASS SPECTROMETRY</scope>
</reference>
<reference key="5">
    <citation type="journal article" date="2012" name="FEBS J.">
        <title>Crystal structure of greglin, a novel non-classical Kazal inhibitor, in complex with subtilisin.</title>
        <authorList>
            <person name="Derache C."/>
            <person name="Epinette C."/>
            <person name="Roussel A."/>
            <person name="Gabant G."/>
            <person name="Cadene M."/>
            <person name="Korkmaz B."/>
            <person name="Gauthier F."/>
            <person name="Kellenberger C."/>
        </authorList>
    </citation>
    <scope>FUNCTION</scope>
    <scope>BIOPHYSICOCHEMICAL PROPERTIES</scope>
</reference>
<name>IOVO_CHICK</name>
<keyword id="KW-0020">Allergen</keyword>
<keyword id="KW-0903">Direct protein sequencing</keyword>
<keyword id="KW-1015">Disulfide bond</keyword>
<keyword id="KW-0325">Glycoprotein</keyword>
<keyword id="KW-0646">Protease inhibitor</keyword>
<keyword id="KW-1185">Reference proteome</keyword>
<keyword id="KW-0677">Repeat</keyword>
<keyword id="KW-0964">Secreted</keyword>
<keyword id="KW-0722">Serine protease inhibitor</keyword>
<keyword id="KW-0732">Signal</keyword>
<organism>
    <name type="scientific">Gallus gallus</name>
    <name type="common">Chicken</name>
    <dbReference type="NCBI Taxonomy" id="9031"/>
    <lineage>
        <taxon>Eukaryota</taxon>
        <taxon>Metazoa</taxon>
        <taxon>Chordata</taxon>
        <taxon>Craniata</taxon>
        <taxon>Vertebrata</taxon>
        <taxon>Euteleostomi</taxon>
        <taxon>Archelosauria</taxon>
        <taxon>Archosauria</taxon>
        <taxon>Dinosauria</taxon>
        <taxon>Saurischia</taxon>
        <taxon>Theropoda</taxon>
        <taxon>Coelurosauria</taxon>
        <taxon>Aves</taxon>
        <taxon>Neognathae</taxon>
        <taxon>Galloanserae</taxon>
        <taxon>Galliformes</taxon>
        <taxon>Phasianidae</taxon>
        <taxon>Phasianinae</taxon>
        <taxon>Gallus</taxon>
    </lineage>
</organism>